<organism>
    <name type="scientific">Haliaeetus albicilla</name>
    <name type="common">White-tailed sea-eagle</name>
    <name type="synonym">Falco albicilla</name>
    <dbReference type="NCBI Taxonomy" id="8969"/>
    <lineage>
        <taxon>Eukaryota</taxon>
        <taxon>Metazoa</taxon>
        <taxon>Chordata</taxon>
        <taxon>Craniata</taxon>
        <taxon>Vertebrata</taxon>
        <taxon>Euteleostomi</taxon>
        <taxon>Archelosauria</taxon>
        <taxon>Archosauria</taxon>
        <taxon>Dinosauria</taxon>
        <taxon>Saurischia</taxon>
        <taxon>Theropoda</taxon>
        <taxon>Coelurosauria</taxon>
        <taxon>Aves</taxon>
        <taxon>Neognathae</taxon>
        <taxon>Neoaves</taxon>
        <taxon>Telluraves</taxon>
        <taxon>Accipitrimorphae</taxon>
        <taxon>Accipitriformes</taxon>
        <taxon>Accipitridae</taxon>
        <taxon>Accipitrinae</taxon>
        <taxon>Haliaeetus</taxon>
    </lineage>
</organism>
<feature type="chain" id="PRO_0000073124" description="Ovomucoid">
    <location>
        <begin position="1" status="less than"/>
        <end position="54" status="greater than"/>
    </location>
</feature>
<feature type="domain" description="Kazal-like" evidence="1">
    <location>
        <begin position="4"/>
        <end position="54"/>
    </location>
</feature>
<feature type="site" description="Reactive bond 3">
    <location>
        <begin position="16"/>
        <end position="17"/>
    </location>
</feature>
<feature type="glycosylation site" description="N-linked (GlcNAc...) asparagine">
    <location>
        <position position="43"/>
    </location>
</feature>
<feature type="disulfide bond">
    <location>
        <begin position="6"/>
        <end position="36"/>
    </location>
</feature>
<feature type="disulfide bond">
    <location>
        <begin position="14"/>
        <end position="33"/>
    </location>
</feature>
<feature type="disulfide bond">
    <location>
        <begin position="22"/>
        <end position="54"/>
    </location>
</feature>
<feature type="non-terminal residue">
    <location>
        <position position="1"/>
    </location>
</feature>
<feature type="non-terminal residue">
    <location>
        <position position="54"/>
    </location>
</feature>
<sequence>ITIVDCSDYPKPVCSLEYMPLCGSDSKTYSNKCDFCNAVVDSNGTLTLSHFGKC</sequence>
<name>IOVO_HALAL</name>
<reference key="1">
    <citation type="journal article" date="1990" name="J. Protein Chem.">
        <title>Amino acid sequences of ovomucoid third domain from 25 additional species of birds.</title>
        <authorList>
            <person name="Laskowski M. Jr."/>
            <person name="Apostol I."/>
            <person name="Ardelt W."/>
            <person name="Cook J."/>
            <person name="Giletto A."/>
            <person name="Kelly C.A."/>
            <person name="Lu W."/>
            <person name="Park S.J."/>
            <person name="Qasim M.A."/>
            <person name="Whatley H.E."/>
            <person name="Wieczorek A."/>
            <person name="Wynn R."/>
        </authorList>
    </citation>
    <scope>PROTEIN SEQUENCE</scope>
</reference>
<dbReference type="PIR" id="G61492">
    <property type="entry name" value="G61492"/>
</dbReference>
<dbReference type="SMR" id="P52268"/>
<dbReference type="GO" id="GO:0005576">
    <property type="term" value="C:extracellular region"/>
    <property type="evidence" value="ECO:0007669"/>
    <property type="project" value="UniProtKB-SubCell"/>
</dbReference>
<dbReference type="GO" id="GO:0004867">
    <property type="term" value="F:serine-type endopeptidase inhibitor activity"/>
    <property type="evidence" value="ECO:0007669"/>
    <property type="project" value="UniProtKB-KW"/>
</dbReference>
<dbReference type="CDD" id="cd00104">
    <property type="entry name" value="KAZAL_FS"/>
    <property type="match status" value="1"/>
</dbReference>
<dbReference type="FunFam" id="3.30.60.30:FF:000037">
    <property type="entry name" value="Ovomucoid"/>
    <property type="match status" value="1"/>
</dbReference>
<dbReference type="Gene3D" id="3.30.60.30">
    <property type="match status" value="1"/>
</dbReference>
<dbReference type="InterPro" id="IPR051597">
    <property type="entry name" value="Bifunctional_prot_inhibitor"/>
</dbReference>
<dbReference type="InterPro" id="IPR002350">
    <property type="entry name" value="Kazal_dom"/>
</dbReference>
<dbReference type="InterPro" id="IPR036058">
    <property type="entry name" value="Kazal_dom_sf"/>
</dbReference>
<dbReference type="InterPro" id="IPR001239">
    <property type="entry name" value="Prot_inh_Kazal-m"/>
</dbReference>
<dbReference type="PANTHER" id="PTHR47729:SF1">
    <property type="entry name" value="OVOMUCOID-LIKE-RELATED"/>
    <property type="match status" value="1"/>
</dbReference>
<dbReference type="PANTHER" id="PTHR47729">
    <property type="entry name" value="SERINE PEPTIDASE INHIBITOR, KAZAL TYPE 2, TANDEM DUPLICATE 1-RELATED"/>
    <property type="match status" value="1"/>
</dbReference>
<dbReference type="Pfam" id="PF00050">
    <property type="entry name" value="Kazal_1"/>
    <property type="match status" value="1"/>
</dbReference>
<dbReference type="PRINTS" id="PR00290">
    <property type="entry name" value="KAZALINHBTR"/>
</dbReference>
<dbReference type="SMART" id="SM00280">
    <property type="entry name" value="KAZAL"/>
    <property type="match status" value="1"/>
</dbReference>
<dbReference type="SUPFAM" id="SSF100895">
    <property type="entry name" value="Kazal-type serine protease inhibitors"/>
    <property type="match status" value="1"/>
</dbReference>
<dbReference type="PROSITE" id="PS00282">
    <property type="entry name" value="KAZAL_1"/>
    <property type="match status" value="1"/>
</dbReference>
<dbReference type="PROSITE" id="PS51465">
    <property type="entry name" value="KAZAL_2"/>
    <property type="match status" value="1"/>
</dbReference>
<accession>P52268</accession>
<evidence type="ECO:0000255" key="1">
    <source>
        <dbReference type="PROSITE-ProRule" id="PRU00798"/>
    </source>
</evidence>
<protein>
    <recommendedName>
        <fullName>Ovomucoid</fullName>
    </recommendedName>
</protein>
<proteinExistence type="evidence at protein level"/>
<keyword id="KW-0903">Direct protein sequencing</keyword>
<keyword id="KW-1015">Disulfide bond</keyword>
<keyword id="KW-0325">Glycoprotein</keyword>
<keyword id="KW-0646">Protease inhibitor</keyword>
<keyword id="KW-0677">Repeat</keyword>
<keyword id="KW-0964">Secreted</keyword>
<keyword id="KW-0722">Serine protease inhibitor</keyword>
<comment type="subcellular location">
    <subcellularLocation>
        <location>Secreted</location>
    </subcellularLocation>
</comment>
<comment type="domain">
    <text>Avian ovomucoid consists of three homologous, tandem Kazal family inhibitory domains.</text>
</comment>